<proteinExistence type="evidence at protein level"/>
<evidence type="ECO:0000250" key="1">
    <source>
        <dbReference type="UniProtKB" id="P38524"/>
    </source>
</evidence>
<evidence type="ECO:0000255" key="2">
    <source>
        <dbReference type="PROSITE-ProRule" id="PRU00705"/>
    </source>
</evidence>
<evidence type="ECO:0000269" key="3">
    <source ref="1"/>
</evidence>
<evidence type="ECO:0000305" key="4"/>
<accession>P83342</accession>
<feature type="chain" id="PRO_0000220419" description="High-potential iron-sulfur protein isozyme 2">
    <location>
        <begin position="1"/>
        <end position="74"/>
    </location>
</feature>
<feature type="binding site" evidence="2">
    <location>
        <position position="36"/>
    </location>
    <ligand>
        <name>[4Fe-4S] cluster</name>
        <dbReference type="ChEBI" id="CHEBI:49883"/>
    </ligand>
</feature>
<feature type="binding site" evidence="2">
    <location>
        <position position="39"/>
    </location>
    <ligand>
        <name>[4Fe-4S] cluster</name>
        <dbReference type="ChEBI" id="CHEBI:49883"/>
    </ligand>
</feature>
<feature type="binding site" evidence="2">
    <location>
        <position position="53"/>
    </location>
    <ligand>
        <name>[4Fe-4S] cluster</name>
        <dbReference type="ChEBI" id="CHEBI:49883"/>
    </ligand>
</feature>
<feature type="binding site" evidence="2">
    <location>
        <position position="67"/>
    </location>
    <ligand>
        <name>[4Fe-4S] cluster</name>
        <dbReference type="ChEBI" id="CHEBI:49883"/>
    </ligand>
</feature>
<keyword id="KW-0004">4Fe-4S</keyword>
<keyword id="KW-0903">Direct protein sequencing</keyword>
<keyword id="KW-0249">Electron transport</keyword>
<keyword id="KW-0408">Iron</keyword>
<keyword id="KW-0411">Iron-sulfur</keyword>
<keyword id="KW-0479">Metal-binding</keyword>
<keyword id="KW-0813">Transport</keyword>
<sequence length="74" mass="8019">AELERLSEDDATAQALSYTHDASGVTHDSYQEGSRCSNCLLYSNPDAKDWGPCSVFPKHLVAEGGWCTAWVGRG</sequence>
<dbReference type="SMR" id="P83342"/>
<dbReference type="STRING" id="195064.SAMN05421721_10328"/>
<dbReference type="GO" id="GO:0051539">
    <property type="term" value="F:4 iron, 4 sulfur cluster binding"/>
    <property type="evidence" value="ECO:0007669"/>
    <property type="project" value="UniProtKB-KW"/>
</dbReference>
<dbReference type="GO" id="GO:0009055">
    <property type="term" value="F:electron transfer activity"/>
    <property type="evidence" value="ECO:0007669"/>
    <property type="project" value="InterPro"/>
</dbReference>
<dbReference type="GO" id="GO:0046872">
    <property type="term" value="F:metal ion binding"/>
    <property type="evidence" value="ECO:0007669"/>
    <property type="project" value="UniProtKB-KW"/>
</dbReference>
<dbReference type="GO" id="GO:0019646">
    <property type="term" value="P:aerobic electron transport chain"/>
    <property type="evidence" value="ECO:0007669"/>
    <property type="project" value="InterPro"/>
</dbReference>
<dbReference type="Gene3D" id="4.10.490.10">
    <property type="entry name" value="High potential iron-sulphur protein"/>
    <property type="match status" value="1"/>
</dbReference>
<dbReference type="InterPro" id="IPR000170">
    <property type="entry name" value="High_potential_FeS_prot"/>
</dbReference>
<dbReference type="InterPro" id="IPR036369">
    <property type="entry name" value="HIPIP_sf"/>
</dbReference>
<dbReference type="Pfam" id="PF01355">
    <property type="entry name" value="HIPIP"/>
    <property type="match status" value="1"/>
</dbReference>
<dbReference type="SUPFAM" id="SSF57652">
    <property type="entry name" value="HIPIP (high potential iron protein)"/>
    <property type="match status" value="1"/>
</dbReference>
<dbReference type="PROSITE" id="PS51373">
    <property type="entry name" value="HIPIP"/>
    <property type="match status" value="1"/>
</dbReference>
<protein>
    <recommendedName>
        <fullName>High-potential iron-sulfur protein isozyme 2</fullName>
        <shortName>HiPIP 2</shortName>
    </recommendedName>
</protein>
<reference evidence="4" key="1">
    <citation type="submission" date="2002-05" db="UniProtKB">
        <authorList>
            <person name="Van Driessche G.A.A."/>
            <person name="Vandenberghe I."/>
            <person name="Jacquemotte F."/>
            <person name="Devreese B."/>
            <person name="Van Beeumen J.J."/>
        </authorList>
    </citation>
    <scope>PROTEIN SEQUENCE</scope>
    <scope>MASS SPECTROMETRY</scope>
</reference>
<name>HIP2_ECTMO</name>
<organism evidence="4">
    <name type="scientific">Ectothiorhodospira mobilis</name>
    <dbReference type="NCBI Taxonomy" id="195064"/>
    <lineage>
        <taxon>Bacteria</taxon>
        <taxon>Pseudomonadati</taxon>
        <taxon>Pseudomonadota</taxon>
        <taxon>Gammaproteobacteria</taxon>
        <taxon>Chromatiales</taxon>
        <taxon>Ectothiorhodospiraceae</taxon>
        <taxon>Ectothiorhodospira</taxon>
    </lineage>
</organism>
<comment type="function">
    <text evidence="1">Specific class of high-redox-potential 4Fe-4S ferredoxins. Functions in anaerobic electron transport in most purple and in some other photosynthetic bacteria and in at least one genus (Paracoccus) of halophilic, denitrifying bacteria.</text>
</comment>
<comment type="subunit">
    <text evidence="1">Homodimer.</text>
</comment>
<comment type="mass spectrometry" mass="8366.3" method="Electrospray" evidence="3"/>
<comment type="similarity">
    <text evidence="2">Belongs to the high-potential iron-sulfur protein (HiPIP) family.</text>
</comment>